<feature type="chain" id="PRO_0000274160" description="Epimerase family protein SSP1921">
    <location>
        <begin position="1"/>
        <end position="298"/>
    </location>
</feature>
<comment type="similarity">
    <text evidence="1">Belongs to the NAD(P)-dependent epimerase/dehydratase family. SDR39U1 subfamily.</text>
</comment>
<organism>
    <name type="scientific">Staphylococcus saprophyticus subsp. saprophyticus (strain ATCC 15305 / DSM 20229 / NCIMB 8711 / NCTC 7292 / S-41)</name>
    <dbReference type="NCBI Taxonomy" id="342451"/>
    <lineage>
        <taxon>Bacteria</taxon>
        <taxon>Bacillati</taxon>
        <taxon>Bacillota</taxon>
        <taxon>Bacilli</taxon>
        <taxon>Bacillales</taxon>
        <taxon>Staphylococcaceae</taxon>
        <taxon>Staphylococcus</taxon>
    </lineage>
</organism>
<accession>Q49VZ4</accession>
<sequence length="298" mass="34234">MKHYLITGGTGMIGSQLVKAIIQSDAHITILTRQDMTSSHPKISYVNWSQPNWENEIPDIDIVINLAGASLNKRWTKSYKQTIMLSRIQATQALFELFQNRKHKPEVLFNASAVGYYKPDLYRTYTELYKTLPFDFLSEVVYQWERMARQFETLGTRVVIGRFGMVLSNDGGALPMMKLPYDFYLGGKLGSGRQWYSWIHIDDLVRALLHTINTESARGVFNFTAPIVEHQNMFGYTLARVSHRPHHTWVPSLAIRLALGQMSTVVLDTQKVIPNKLQATHFKFKYPDLKIALEDLVH</sequence>
<keyword id="KW-1185">Reference proteome</keyword>
<protein>
    <recommendedName>
        <fullName>Epimerase family protein SSP1921</fullName>
    </recommendedName>
</protein>
<gene>
    <name type="ordered locus">SSP1921</name>
</gene>
<evidence type="ECO:0000305" key="1"/>
<proteinExistence type="inferred from homology"/>
<name>Y1921_STAS1</name>
<dbReference type="EMBL" id="AP008934">
    <property type="protein sequence ID" value="BAE19066.1"/>
    <property type="molecule type" value="Genomic_DNA"/>
</dbReference>
<dbReference type="RefSeq" id="WP_002483887.1">
    <property type="nucleotide sequence ID" value="NZ_MTGA01000039.1"/>
</dbReference>
<dbReference type="SMR" id="Q49VZ4"/>
<dbReference type="GeneID" id="3615275"/>
<dbReference type="KEGG" id="ssp:SSP1921"/>
<dbReference type="PATRIC" id="fig|342451.11.peg.1914"/>
<dbReference type="eggNOG" id="COG1090">
    <property type="taxonomic scope" value="Bacteria"/>
</dbReference>
<dbReference type="HOGENOM" id="CLU_047373_0_3_9"/>
<dbReference type="OrthoDB" id="9801773at2"/>
<dbReference type="Proteomes" id="UP000006371">
    <property type="component" value="Chromosome"/>
</dbReference>
<dbReference type="Gene3D" id="3.40.50.720">
    <property type="entry name" value="NAD(P)-binding Rossmann-like Domain"/>
    <property type="match status" value="1"/>
</dbReference>
<dbReference type="InterPro" id="IPR013549">
    <property type="entry name" value="DUF1731"/>
</dbReference>
<dbReference type="InterPro" id="IPR001509">
    <property type="entry name" value="Epimerase_deHydtase"/>
</dbReference>
<dbReference type="InterPro" id="IPR036291">
    <property type="entry name" value="NAD(P)-bd_dom_sf"/>
</dbReference>
<dbReference type="InterPro" id="IPR010099">
    <property type="entry name" value="SDR39U1"/>
</dbReference>
<dbReference type="NCBIfam" id="TIGR01777">
    <property type="entry name" value="yfcH"/>
    <property type="match status" value="1"/>
</dbReference>
<dbReference type="PANTHER" id="PTHR11092:SF0">
    <property type="entry name" value="EPIMERASE FAMILY PROTEIN SDR39U1"/>
    <property type="match status" value="1"/>
</dbReference>
<dbReference type="PANTHER" id="PTHR11092">
    <property type="entry name" value="SUGAR NUCLEOTIDE EPIMERASE RELATED"/>
    <property type="match status" value="1"/>
</dbReference>
<dbReference type="Pfam" id="PF08338">
    <property type="entry name" value="DUF1731"/>
    <property type="match status" value="1"/>
</dbReference>
<dbReference type="Pfam" id="PF01370">
    <property type="entry name" value="Epimerase"/>
    <property type="match status" value="1"/>
</dbReference>
<dbReference type="SUPFAM" id="SSF51735">
    <property type="entry name" value="NAD(P)-binding Rossmann-fold domains"/>
    <property type="match status" value="1"/>
</dbReference>
<reference key="1">
    <citation type="journal article" date="2005" name="Proc. Natl. Acad. Sci. U.S.A.">
        <title>Whole genome sequence of Staphylococcus saprophyticus reveals the pathogenesis of uncomplicated urinary tract infection.</title>
        <authorList>
            <person name="Kuroda M."/>
            <person name="Yamashita A."/>
            <person name="Hirakawa H."/>
            <person name="Kumano M."/>
            <person name="Morikawa K."/>
            <person name="Higashide M."/>
            <person name="Maruyama A."/>
            <person name="Inose Y."/>
            <person name="Matoba K."/>
            <person name="Toh H."/>
            <person name="Kuhara S."/>
            <person name="Hattori M."/>
            <person name="Ohta T."/>
        </authorList>
    </citation>
    <scope>NUCLEOTIDE SEQUENCE [LARGE SCALE GENOMIC DNA]</scope>
    <source>
        <strain>ATCC 15305 / DSM 20229 / NCIMB 8711 / NCTC 7292 / S-41</strain>
    </source>
</reference>